<name>Y2417_MYCTU</name>
<sequence length="280" mass="28488">MTVVVVTDTSCRLPADLREQWSIRQVPLHILLDGLDLRDGVDEIPDDIHKRHATTAGATPVELSAAYQRALADSGGDGVVAVHISSALSGTFRAAELTAAELGPAVRVIDSRSAAMGVGFAALAAGRAAAAGDELDTVARAAAAAVSRIHAFVAVARLDNLRRSGRISGAKAWLGTALALKPLLSVDDGKLVLVQRVRTVSNATAVMIDRVCQLVGDRPAALAVHHVADPAAANDVAAALAERLPACEPAMVTAMGPVLALHVGAGAVGVCVDVGASPPA</sequence>
<dbReference type="EMBL" id="AL123456">
    <property type="protein sequence ID" value="CCP45208.1"/>
    <property type="molecule type" value="Genomic_DNA"/>
</dbReference>
<dbReference type="PIR" id="D70685">
    <property type="entry name" value="D70685"/>
</dbReference>
<dbReference type="RefSeq" id="NP_216933.1">
    <property type="nucleotide sequence ID" value="NC_000962.3"/>
</dbReference>
<dbReference type="RefSeq" id="WP_003412381.1">
    <property type="nucleotide sequence ID" value="NZ_NVQJ01000054.1"/>
</dbReference>
<dbReference type="SMR" id="P9WP05"/>
<dbReference type="STRING" id="83332.Rv2417c"/>
<dbReference type="PaxDb" id="83332-Rv2417c"/>
<dbReference type="DNASU" id="885692"/>
<dbReference type="GeneID" id="885692"/>
<dbReference type="KEGG" id="mtu:Rv2417c"/>
<dbReference type="KEGG" id="mtv:RVBD_2417c"/>
<dbReference type="TubercuList" id="Rv2417c"/>
<dbReference type="eggNOG" id="COG1307">
    <property type="taxonomic scope" value="Bacteria"/>
</dbReference>
<dbReference type="InParanoid" id="P9WP05"/>
<dbReference type="OrthoDB" id="9760324at2"/>
<dbReference type="PhylomeDB" id="P9WP05"/>
<dbReference type="Proteomes" id="UP000001584">
    <property type="component" value="Chromosome"/>
</dbReference>
<dbReference type="GO" id="GO:0005886">
    <property type="term" value="C:plasma membrane"/>
    <property type="evidence" value="ECO:0007005"/>
    <property type="project" value="MTBBASE"/>
</dbReference>
<dbReference type="GO" id="GO:0008289">
    <property type="term" value="F:lipid binding"/>
    <property type="evidence" value="ECO:0007669"/>
    <property type="project" value="UniProtKB-KW"/>
</dbReference>
<dbReference type="Gene3D" id="3.30.1180.10">
    <property type="match status" value="1"/>
</dbReference>
<dbReference type="Gene3D" id="3.40.50.10170">
    <property type="match status" value="1"/>
</dbReference>
<dbReference type="InterPro" id="IPR003797">
    <property type="entry name" value="DegV"/>
</dbReference>
<dbReference type="InterPro" id="IPR043168">
    <property type="entry name" value="DegV_C"/>
</dbReference>
<dbReference type="InterPro" id="IPR050270">
    <property type="entry name" value="DegV_domain_contain"/>
</dbReference>
<dbReference type="NCBIfam" id="TIGR00762">
    <property type="entry name" value="DegV"/>
    <property type="match status" value="1"/>
</dbReference>
<dbReference type="PANTHER" id="PTHR33434">
    <property type="entry name" value="DEGV DOMAIN-CONTAINING PROTEIN DR_1986-RELATED"/>
    <property type="match status" value="1"/>
</dbReference>
<dbReference type="PANTHER" id="PTHR33434:SF2">
    <property type="entry name" value="FATTY ACID-BINDING PROTEIN TM_1468"/>
    <property type="match status" value="1"/>
</dbReference>
<dbReference type="Pfam" id="PF02645">
    <property type="entry name" value="DegV"/>
    <property type="match status" value="1"/>
</dbReference>
<dbReference type="SUPFAM" id="SSF82549">
    <property type="entry name" value="DAK1/DegV-like"/>
    <property type="match status" value="1"/>
</dbReference>
<dbReference type="PROSITE" id="PS51482">
    <property type="entry name" value="DEGV"/>
    <property type="match status" value="1"/>
</dbReference>
<proteinExistence type="evidence at protein level"/>
<accession>P9WP05</accession>
<accession>L0TB58</accession>
<accession>P67368</accession>
<accession>P71726</accession>
<organism>
    <name type="scientific">Mycobacterium tuberculosis (strain ATCC 25618 / H37Rv)</name>
    <dbReference type="NCBI Taxonomy" id="83332"/>
    <lineage>
        <taxon>Bacteria</taxon>
        <taxon>Bacillati</taxon>
        <taxon>Actinomycetota</taxon>
        <taxon>Actinomycetes</taxon>
        <taxon>Mycobacteriales</taxon>
        <taxon>Mycobacteriaceae</taxon>
        <taxon>Mycobacterium</taxon>
        <taxon>Mycobacterium tuberculosis complex</taxon>
    </lineage>
</organism>
<reference key="1">
    <citation type="journal article" date="1998" name="Nature">
        <title>Deciphering the biology of Mycobacterium tuberculosis from the complete genome sequence.</title>
        <authorList>
            <person name="Cole S.T."/>
            <person name="Brosch R."/>
            <person name="Parkhill J."/>
            <person name="Garnier T."/>
            <person name="Churcher C.M."/>
            <person name="Harris D.E."/>
            <person name="Gordon S.V."/>
            <person name="Eiglmeier K."/>
            <person name="Gas S."/>
            <person name="Barry C.E. III"/>
            <person name="Tekaia F."/>
            <person name="Badcock K."/>
            <person name="Basham D."/>
            <person name="Brown D."/>
            <person name="Chillingworth T."/>
            <person name="Connor R."/>
            <person name="Davies R.M."/>
            <person name="Devlin K."/>
            <person name="Feltwell T."/>
            <person name="Gentles S."/>
            <person name="Hamlin N."/>
            <person name="Holroyd S."/>
            <person name="Hornsby T."/>
            <person name="Jagels K."/>
            <person name="Krogh A."/>
            <person name="McLean J."/>
            <person name="Moule S."/>
            <person name="Murphy L.D."/>
            <person name="Oliver S."/>
            <person name="Osborne J."/>
            <person name="Quail M.A."/>
            <person name="Rajandream M.A."/>
            <person name="Rogers J."/>
            <person name="Rutter S."/>
            <person name="Seeger K."/>
            <person name="Skelton S."/>
            <person name="Squares S."/>
            <person name="Squares R."/>
            <person name="Sulston J.E."/>
            <person name="Taylor K."/>
            <person name="Whitehead S."/>
            <person name="Barrell B.G."/>
        </authorList>
    </citation>
    <scope>NUCLEOTIDE SEQUENCE [LARGE SCALE GENOMIC DNA]</scope>
    <source>
        <strain>ATCC 25618 / H37Rv</strain>
    </source>
</reference>
<reference key="2">
    <citation type="journal article" date="2011" name="Mol. Cell. Proteomics">
        <title>Proteogenomic analysis of Mycobacterium tuberculosis by high resolution mass spectrometry.</title>
        <authorList>
            <person name="Kelkar D.S."/>
            <person name="Kumar D."/>
            <person name="Kumar P."/>
            <person name="Balakrishnan L."/>
            <person name="Muthusamy B."/>
            <person name="Yadav A.K."/>
            <person name="Shrivastava P."/>
            <person name="Marimuthu A."/>
            <person name="Anand S."/>
            <person name="Sundaram H."/>
            <person name="Kingsbury R."/>
            <person name="Harsha H.C."/>
            <person name="Nair B."/>
            <person name="Prasad T.S."/>
            <person name="Chauhan D.S."/>
            <person name="Katoch K."/>
            <person name="Katoch V.M."/>
            <person name="Kumar P."/>
            <person name="Chaerkady R."/>
            <person name="Ramachandran S."/>
            <person name="Dash D."/>
            <person name="Pandey A."/>
        </authorList>
    </citation>
    <scope>IDENTIFICATION BY MASS SPECTROMETRY [LARGE SCALE ANALYSIS]</scope>
    <source>
        <strain>ATCC 25618 / H37Rv</strain>
    </source>
</reference>
<feature type="chain" id="PRO_0000209778" description="DegV domain-containing protein Rv2417c">
    <location>
        <begin position="1"/>
        <end position="280"/>
    </location>
</feature>
<feature type="domain" description="DegV" evidence="3">
    <location>
        <begin position="3"/>
        <end position="274"/>
    </location>
</feature>
<feature type="binding site" evidence="2">
    <location>
        <position position="89"/>
    </location>
    <ligand>
        <name>hexadecanoate</name>
        <dbReference type="ChEBI" id="CHEBI:7896"/>
    </ligand>
</feature>
<protein>
    <recommendedName>
        <fullName>DegV domain-containing protein Rv2417c</fullName>
    </recommendedName>
</protein>
<comment type="function">
    <text evidence="1">May bind long-chain fatty acids, such as palmitate, and may play a role in lipid transport or fatty acid metabolism.</text>
</comment>
<evidence type="ECO:0000250" key="1"/>
<evidence type="ECO:0000250" key="2">
    <source>
        <dbReference type="UniProtKB" id="Q9X1H9"/>
    </source>
</evidence>
<evidence type="ECO:0000255" key="3">
    <source>
        <dbReference type="PROSITE-ProRule" id="PRU00815"/>
    </source>
</evidence>
<gene>
    <name type="ordered locus">Rv2417c</name>
    <name type="ORF">MTCY253.03</name>
</gene>
<keyword id="KW-0446">Lipid-binding</keyword>
<keyword id="KW-1185">Reference proteome</keyword>